<proteinExistence type="evidence at protein level"/>
<protein>
    <recommendedName>
        <fullName>Hemoglobin subunit beta-1</fullName>
    </recommendedName>
    <alternativeName>
        <fullName>Beta-1-globin</fullName>
    </alternativeName>
    <alternativeName>
        <fullName>Hemoglobin beta-1 chain</fullName>
    </alternativeName>
</protein>
<gene>
    <name type="primary">hbb1</name>
</gene>
<keyword id="KW-0903">Direct protein sequencing</keyword>
<keyword id="KW-0349">Heme</keyword>
<keyword id="KW-0408">Iron</keyword>
<keyword id="KW-0479">Metal-binding</keyword>
<keyword id="KW-0561">Oxygen transport</keyword>
<keyword id="KW-0813">Transport</keyword>
<comment type="function">
    <text>Involved in oxygen transport from gills to the various peripheral tissues.</text>
</comment>
<comment type="subunit">
    <text evidence="2">Hb 1 is a heterotetramer of two alpha-1 and two beta-1 chains.</text>
</comment>
<comment type="tissue specificity">
    <text evidence="3">Red blood cells.</text>
</comment>
<comment type="mass spectrometry"/>
<comment type="miscellaneous">
    <text>This fish has two hemoglobins: Hb1 (major) and Hb2 (about 15-20% of the total). They display the Root effect and the alkaline Bohr effect, which is enhanced by organophosphate and to a lesser extent by chloride.</text>
</comment>
<comment type="similarity">
    <text evidence="1 3">Belongs to the globin family.</text>
</comment>
<feature type="chain" id="PRO_0000052964" description="Hemoglobin subunit beta-1">
    <location>
        <begin position="1"/>
        <end position="146"/>
    </location>
</feature>
<feature type="domain" description="Globin" evidence="1">
    <location>
        <begin position="2"/>
        <end position="146"/>
    </location>
</feature>
<feature type="binding site" description="distal binding residue" evidence="1">
    <location>
        <position position="63"/>
    </location>
    <ligand>
        <name>heme b</name>
        <dbReference type="ChEBI" id="CHEBI:60344"/>
    </ligand>
    <ligandPart>
        <name>Fe</name>
        <dbReference type="ChEBI" id="CHEBI:18248"/>
    </ligandPart>
</feature>
<feature type="binding site" description="proximal binding residue" evidence="1">
    <location>
        <position position="92"/>
    </location>
    <ligand>
        <name>heme b</name>
        <dbReference type="ChEBI" id="CHEBI:60344"/>
    </ligand>
    <ligandPart>
        <name>Fe</name>
        <dbReference type="ChEBI" id="CHEBI:18248"/>
    </ligandPart>
</feature>
<accession>P83612</accession>
<reference evidence="3" key="1">
    <citation type="journal article" date="2003" name="Eur. J. Biochem.">
        <title>Unique features of the hemoglobin system of the Antarctic fish Gobionotothen gibberifrons.</title>
        <authorList>
            <person name="Marinakis P."/>
            <person name="Tamburrini M."/>
            <person name="Carratore V."/>
            <person name="di Prisco G."/>
        </authorList>
    </citation>
    <scope>PROTEIN SEQUENCE</scope>
    <scope>SUBUNIT</scope>
    <scope>MASS SPECTROMETRY</scope>
    <source>
        <tissue evidence="2">Blood</tissue>
    </source>
</reference>
<dbReference type="SMR" id="P83612"/>
<dbReference type="GO" id="GO:0072562">
    <property type="term" value="C:blood microparticle"/>
    <property type="evidence" value="ECO:0007669"/>
    <property type="project" value="TreeGrafter"/>
</dbReference>
<dbReference type="GO" id="GO:0031838">
    <property type="term" value="C:haptoglobin-hemoglobin complex"/>
    <property type="evidence" value="ECO:0007669"/>
    <property type="project" value="TreeGrafter"/>
</dbReference>
<dbReference type="GO" id="GO:0005833">
    <property type="term" value="C:hemoglobin complex"/>
    <property type="evidence" value="ECO:0007669"/>
    <property type="project" value="InterPro"/>
</dbReference>
<dbReference type="GO" id="GO:0031720">
    <property type="term" value="F:haptoglobin binding"/>
    <property type="evidence" value="ECO:0007669"/>
    <property type="project" value="TreeGrafter"/>
</dbReference>
<dbReference type="GO" id="GO:0020037">
    <property type="term" value="F:heme binding"/>
    <property type="evidence" value="ECO:0007669"/>
    <property type="project" value="InterPro"/>
</dbReference>
<dbReference type="GO" id="GO:0046872">
    <property type="term" value="F:metal ion binding"/>
    <property type="evidence" value="ECO:0007669"/>
    <property type="project" value="UniProtKB-KW"/>
</dbReference>
<dbReference type="GO" id="GO:0043177">
    <property type="term" value="F:organic acid binding"/>
    <property type="evidence" value="ECO:0007669"/>
    <property type="project" value="TreeGrafter"/>
</dbReference>
<dbReference type="GO" id="GO:0019825">
    <property type="term" value="F:oxygen binding"/>
    <property type="evidence" value="ECO:0007669"/>
    <property type="project" value="InterPro"/>
</dbReference>
<dbReference type="GO" id="GO:0005344">
    <property type="term" value="F:oxygen carrier activity"/>
    <property type="evidence" value="ECO:0007669"/>
    <property type="project" value="UniProtKB-KW"/>
</dbReference>
<dbReference type="GO" id="GO:0004601">
    <property type="term" value="F:peroxidase activity"/>
    <property type="evidence" value="ECO:0007669"/>
    <property type="project" value="TreeGrafter"/>
</dbReference>
<dbReference type="GO" id="GO:0042744">
    <property type="term" value="P:hydrogen peroxide catabolic process"/>
    <property type="evidence" value="ECO:0007669"/>
    <property type="project" value="TreeGrafter"/>
</dbReference>
<dbReference type="CDD" id="cd08925">
    <property type="entry name" value="Hb-beta-like"/>
    <property type="match status" value="1"/>
</dbReference>
<dbReference type="FunFam" id="1.10.490.10:FF:000001">
    <property type="entry name" value="Hemoglobin subunit beta"/>
    <property type="match status" value="1"/>
</dbReference>
<dbReference type="Gene3D" id="1.10.490.10">
    <property type="entry name" value="Globins"/>
    <property type="match status" value="1"/>
</dbReference>
<dbReference type="InterPro" id="IPR000971">
    <property type="entry name" value="Globin"/>
</dbReference>
<dbReference type="InterPro" id="IPR009050">
    <property type="entry name" value="Globin-like_sf"/>
</dbReference>
<dbReference type="InterPro" id="IPR012292">
    <property type="entry name" value="Globin/Proto"/>
</dbReference>
<dbReference type="InterPro" id="IPR002337">
    <property type="entry name" value="Hemoglobin_b"/>
</dbReference>
<dbReference type="InterPro" id="IPR050056">
    <property type="entry name" value="Hemoglobin_oxygen_transport"/>
</dbReference>
<dbReference type="PANTHER" id="PTHR11442">
    <property type="entry name" value="HEMOGLOBIN FAMILY MEMBER"/>
    <property type="match status" value="1"/>
</dbReference>
<dbReference type="PANTHER" id="PTHR11442:SF7">
    <property type="entry name" value="HEMOGLOBIN SUBUNIT EPSILON"/>
    <property type="match status" value="1"/>
</dbReference>
<dbReference type="Pfam" id="PF00042">
    <property type="entry name" value="Globin"/>
    <property type="match status" value="1"/>
</dbReference>
<dbReference type="PRINTS" id="PR00814">
    <property type="entry name" value="BETAHAEM"/>
</dbReference>
<dbReference type="SUPFAM" id="SSF46458">
    <property type="entry name" value="Globin-like"/>
    <property type="match status" value="1"/>
</dbReference>
<dbReference type="PROSITE" id="PS01033">
    <property type="entry name" value="GLOBIN"/>
    <property type="match status" value="1"/>
</dbReference>
<sequence>VEWTDKERAIITDIFSHMDYDDIGPKALSRCLIVYPWTQRHFSGFGNLYNAEAIIGNANVAAHGIKVLHGLDRGVKNMDNIAATYAELSTLHSEKLHVDPDNFKLLSDCITIVVAAKLGHAFTAETQGALQKFLAVVVSALGKQYH</sequence>
<evidence type="ECO:0000255" key="1">
    <source>
        <dbReference type="PROSITE-ProRule" id="PRU00238"/>
    </source>
</evidence>
<evidence type="ECO:0000269" key="2">
    <source>
    </source>
</evidence>
<evidence type="ECO:0000305" key="3"/>
<name>HBB1_GOBGI</name>
<organism evidence="3">
    <name type="scientific">Gobionotothen gibberifrons</name>
    <name type="common">Humped rockcod</name>
    <name type="synonym">Notothenia gibberifrons</name>
    <dbReference type="NCBI Taxonomy" id="36202"/>
    <lineage>
        <taxon>Eukaryota</taxon>
        <taxon>Metazoa</taxon>
        <taxon>Chordata</taxon>
        <taxon>Craniata</taxon>
        <taxon>Vertebrata</taxon>
        <taxon>Euteleostomi</taxon>
        <taxon>Actinopterygii</taxon>
        <taxon>Neopterygii</taxon>
        <taxon>Teleostei</taxon>
        <taxon>Neoteleostei</taxon>
        <taxon>Acanthomorphata</taxon>
        <taxon>Eupercaria</taxon>
        <taxon>Perciformes</taxon>
        <taxon>Notothenioidei</taxon>
        <taxon>Nototheniidae</taxon>
        <taxon>Gobionotothen</taxon>
    </lineage>
</organism>